<feature type="chain" id="PRO_0000192761" description="Bifunctional uridylyltransferase/uridylyl-removing enzyme">
    <location>
        <begin position="1"/>
        <end position="948"/>
    </location>
</feature>
<feature type="domain" description="HD" evidence="2">
    <location>
        <begin position="489"/>
        <end position="605"/>
    </location>
</feature>
<feature type="domain" description="ACT 1" evidence="1">
    <location>
        <begin position="729"/>
        <end position="810"/>
    </location>
</feature>
<feature type="domain" description="ACT 2" evidence="1">
    <location>
        <begin position="840"/>
        <end position="921"/>
    </location>
</feature>
<feature type="region of interest" description="Uridylyltransferase">
    <location>
        <begin position="1"/>
        <end position="372"/>
    </location>
</feature>
<feature type="region of interest" description="Uridylyl-removing">
    <location>
        <begin position="373"/>
        <end position="728"/>
    </location>
</feature>
<proteinExistence type="inferred from homology"/>
<reference key="1">
    <citation type="submission" date="1996-01" db="EMBL/GenBank/DDBJ databases">
        <authorList>
            <person name="O'Connell K.P."/>
            <person name="Raffel S.J."/>
            <person name="Saville B.J."/>
            <person name="Handelsman J."/>
        </authorList>
    </citation>
    <scope>NUCLEOTIDE SEQUENCE [GENOMIC DNA]</scope>
    <source>
        <strain>CIAT899</strain>
    </source>
</reference>
<accession>Q53245</accession>
<comment type="function">
    <text evidence="1">Modifies, by uridylylation and deuridylylation, the PII regulatory proteins (GlnB and homologs), in response to the nitrogen status of the cell that GlnD senses through the glutamine level. Under low glutamine levels, catalyzes the conversion of the PII proteins and UTP to PII-UMP and PPi, while under higher glutamine levels, GlnD hydrolyzes PII-UMP to PII and UMP (deuridylylation). Thus, controls uridylylation state and activity of the PII proteins, and plays an important role in the regulation of nitrogen fixation and metabolism.</text>
</comment>
<comment type="catalytic activity">
    <reaction evidence="1">
        <text>[protein-PII]-L-tyrosine + UTP = [protein-PII]-uridylyl-L-tyrosine + diphosphate</text>
        <dbReference type="Rhea" id="RHEA:13673"/>
        <dbReference type="Rhea" id="RHEA-COMP:12147"/>
        <dbReference type="Rhea" id="RHEA-COMP:12148"/>
        <dbReference type="ChEBI" id="CHEBI:33019"/>
        <dbReference type="ChEBI" id="CHEBI:46398"/>
        <dbReference type="ChEBI" id="CHEBI:46858"/>
        <dbReference type="ChEBI" id="CHEBI:90602"/>
        <dbReference type="EC" id="2.7.7.59"/>
    </reaction>
</comment>
<comment type="catalytic activity">
    <reaction evidence="1">
        <text>[protein-PII]-uridylyl-L-tyrosine + H2O = [protein-PII]-L-tyrosine + UMP + H(+)</text>
        <dbReference type="Rhea" id="RHEA:48600"/>
        <dbReference type="Rhea" id="RHEA-COMP:12147"/>
        <dbReference type="Rhea" id="RHEA-COMP:12148"/>
        <dbReference type="ChEBI" id="CHEBI:15377"/>
        <dbReference type="ChEBI" id="CHEBI:15378"/>
        <dbReference type="ChEBI" id="CHEBI:46858"/>
        <dbReference type="ChEBI" id="CHEBI:57865"/>
        <dbReference type="ChEBI" id="CHEBI:90602"/>
    </reaction>
</comment>
<comment type="cofactor">
    <cofactor evidence="1">
        <name>Mg(2+)</name>
        <dbReference type="ChEBI" id="CHEBI:18420"/>
    </cofactor>
</comment>
<comment type="activity regulation">
    <text evidence="1">Uridylyltransferase (UTase) activity is inhibited by glutamine, while glutamine activates uridylyl-removing (UR) activity.</text>
</comment>
<comment type="domain">
    <text evidence="1">Has four distinct domains: an N-terminal nucleotidyltransferase (NT) domain responsible for UTase activity, a central HD domain that encodes UR activity, and two C-terminal ACT domains that seem to have a role in glutamine sensing.</text>
</comment>
<comment type="similarity">
    <text evidence="1">Belongs to the GlnD family.</text>
</comment>
<comment type="sequence caution" evidence="3">
    <conflict type="erroneous initiation">
        <sequence resource="EMBL-CDS" id="AAC32290"/>
    </conflict>
</comment>
<evidence type="ECO:0000255" key="1">
    <source>
        <dbReference type="HAMAP-Rule" id="MF_00277"/>
    </source>
</evidence>
<evidence type="ECO:0000255" key="2">
    <source>
        <dbReference type="PROSITE-ProRule" id="PRU01175"/>
    </source>
</evidence>
<evidence type="ECO:0000305" key="3"/>
<dbReference type="EC" id="2.7.7.59" evidence="1"/>
<dbReference type="EC" id="3.1.4.-" evidence="1"/>
<dbReference type="EMBL" id="U47030">
    <property type="protein sequence ID" value="AAC32290.1"/>
    <property type="status" value="ALT_INIT"/>
    <property type="molecule type" value="Genomic_DNA"/>
</dbReference>
<dbReference type="SMR" id="Q53245"/>
<dbReference type="GO" id="GO:0008773">
    <property type="term" value="F:[protein-PII] uridylyltransferase activity"/>
    <property type="evidence" value="ECO:0007669"/>
    <property type="project" value="UniProtKB-UniRule"/>
</dbReference>
<dbReference type="GO" id="GO:0008081">
    <property type="term" value="F:phosphoric diester hydrolase activity"/>
    <property type="evidence" value="ECO:0007669"/>
    <property type="project" value="UniProtKB-UniRule"/>
</dbReference>
<dbReference type="GO" id="GO:0009399">
    <property type="term" value="P:nitrogen fixation"/>
    <property type="evidence" value="ECO:0007669"/>
    <property type="project" value="UniProtKB-KW"/>
</dbReference>
<dbReference type="GO" id="GO:0006808">
    <property type="term" value="P:regulation of nitrogen utilization"/>
    <property type="evidence" value="ECO:0007669"/>
    <property type="project" value="UniProtKB-UniRule"/>
</dbReference>
<dbReference type="CDD" id="cd04899">
    <property type="entry name" value="ACT_ACR-UUR-like_2"/>
    <property type="match status" value="1"/>
</dbReference>
<dbReference type="CDD" id="cd04900">
    <property type="entry name" value="ACT_UUR-like_1"/>
    <property type="match status" value="1"/>
</dbReference>
<dbReference type="CDD" id="cd00077">
    <property type="entry name" value="HDc"/>
    <property type="match status" value="1"/>
</dbReference>
<dbReference type="CDD" id="cd05401">
    <property type="entry name" value="NT_GlnE_GlnD_like"/>
    <property type="match status" value="1"/>
</dbReference>
<dbReference type="Gene3D" id="3.30.70.260">
    <property type="match status" value="1"/>
</dbReference>
<dbReference type="Gene3D" id="3.30.460.10">
    <property type="entry name" value="Beta Polymerase, domain 2"/>
    <property type="match status" value="1"/>
</dbReference>
<dbReference type="Gene3D" id="1.10.3090.10">
    <property type="entry name" value="cca-adding enzyme, domain 2"/>
    <property type="match status" value="1"/>
</dbReference>
<dbReference type="HAMAP" id="MF_00277">
    <property type="entry name" value="PII_uridylyl_transf"/>
    <property type="match status" value="1"/>
</dbReference>
<dbReference type="InterPro" id="IPR045865">
    <property type="entry name" value="ACT-like_dom_sf"/>
</dbReference>
<dbReference type="InterPro" id="IPR002912">
    <property type="entry name" value="ACT_dom"/>
</dbReference>
<dbReference type="InterPro" id="IPR003607">
    <property type="entry name" value="HD/PDEase_dom"/>
</dbReference>
<dbReference type="InterPro" id="IPR006674">
    <property type="entry name" value="HD_domain"/>
</dbReference>
<dbReference type="InterPro" id="IPR043519">
    <property type="entry name" value="NT_sf"/>
</dbReference>
<dbReference type="InterPro" id="IPR013546">
    <property type="entry name" value="PII_UdlTrfase/GS_AdlTrfase"/>
</dbReference>
<dbReference type="InterPro" id="IPR002934">
    <property type="entry name" value="Polymerase_NTP_transf_dom"/>
</dbReference>
<dbReference type="InterPro" id="IPR010043">
    <property type="entry name" value="UTase/UR"/>
</dbReference>
<dbReference type="NCBIfam" id="NF003467">
    <property type="entry name" value="PRK05092.1"/>
    <property type="match status" value="1"/>
</dbReference>
<dbReference type="NCBIfam" id="TIGR01693">
    <property type="entry name" value="UTase_glnD"/>
    <property type="match status" value="1"/>
</dbReference>
<dbReference type="PANTHER" id="PTHR47320">
    <property type="entry name" value="BIFUNCTIONAL URIDYLYLTRANSFERASE/URIDYLYL-REMOVING ENZYME"/>
    <property type="match status" value="1"/>
</dbReference>
<dbReference type="PANTHER" id="PTHR47320:SF1">
    <property type="entry name" value="BIFUNCTIONAL URIDYLYLTRANSFERASE_URIDYLYL-REMOVING ENZYME"/>
    <property type="match status" value="1"/>
</dbReference>
<dbReference type="Pfam" id="PF01842">
    <property type="entry name" value="ACT"/>
    <property type="match status" value="1"/>
</dbReference>
<dbReference type="Pfam" id="PF08335">
    <property type="entry name" value="GlnD_UR_UTase"/>
    <property type="match status" value="1"/>
</dbReference>
<dbReference type="Pfam" id="PF01966">
    <property type="entry name" value="HD"/>
    <property type="match status" value="1"/>
</dbReference>
<dbReference type="Pfam" id="PF01909">
    <property type="entry name" value="NTP_transf_2"/>
    <property type="match status" value="1"/>
</dbReference>
<dbReference type="PIRSF" id="PIRSF006288">
    <property type="entry name" value="PII_uridyltransf"/>
    <property type="match status" value="1"/>
</dbReference>
<dbReference type="SMART" id="SM00471">
    <property type="entry name" value="HDc"/>
    <property type="match status" value="1"/>
</dbReference>
<dbReference type="SUPFAM" id="SSF55021">
    <property type="entry name" value="ACT-like"/>
    <property type="match status" value="2"/>
</dbReference>
<dbReference type="SUPFAM" id="SSF109604">
    <property type="entry name" value="HD-domain/PDEase-like"/>
    <property type="match status" value="1"/>
</dbReference>
<dbReference type="SUPFAM" id="SSF81301">
    <property type="entry name" value="Nucleotidyltransferase"/>
    <property type="match status" value="1"/>
</dbReference>
<dbReference type="SUPFAM" id="SSF81593">
    <property type="entry name" value="Nucleotidyltransferase substrate binding subunit/domain"/>
    <property type="match status" value="1"/>
</dbReference>
<dbReference type="PROSITE" id="PS51671">
    <property type="entry name" value="ACT"/>
    <property type="match status" value="2"/>
</dbReference>
<dbReference type="PROSITE" id="PS51831">
    <property type="entry name" value="HD"/>
    <property type="match status" value="1"/>
</dbReference>
<gene>
    <name evidence="1" type="primary">glnD</name>
</gene>
<protein>
    <recommendedName>
        <fullName evidence="1">Bifunctional uridylyltransferase/uridylyl-removing enzyme</fullName>
        <shortName evidence="1">UTase/UR</shortName>
    </recommendedName>
    <alternativeName>
        <fullName evidence="1">Bifunctional [protein-PII] modification enzyme</fullName>
    </alternativeName>
    <alternativeName>
        <fullName evidence="1">Bifunctional nitrogen sensor protein</fullName>
    </alternativeName>
    <domain>
        <recommendedName>
            <fullName evidence="1">[Protein-PII] uridylyltransferase</fullName>
            <shortName evidence="1">PII uridylyltransferase</shortName>
            <shortName evidence="1">UTase</shortName>
            <ecNumber evidence="1">2.7.7.59</ecNumber>
        </recommendedName>
    </domain>
    <domain>
        <recommendedName>
            <fullName evidence="1">[Protein-PII]-UMP uridylyl-removing enzyme</fullName>
            <shortName evidence="1">UR</shortName>
            <ecNumber evidence="1">3.1.4.-</ecNumber>
        </recommendedName>
    </domain>
</protein>
<sequence length="948" mass="106423">METHHIDFSTVLDVSALKAECEALAKRGLDKNEERSALLALLKKASQDGREEARRLLIADGSGLNCAHRISWLQDQIITVLYDLTVHHAYPKQAGVFSVTAVGGYGRDTLAPGSDIDLLFLFQPKPASETHKAVEFILYMLWDMGFKVGHATRSVEECIREAKSDMTVRTAILETRYICGNVALERELQARFDKEIVTNTGPEFIAAKLAERDERHRKAGDTRYLVEPNVKEGKGGLRDLHTLFWISKYYYHVRDPAELVKLGVLSKQEYRLFEKAEDFLWAVRCHMHFLTGKAEERLSFDIQRDIAAALDYNARPGLSAVERFMKHYFLVAKDVGDLTRILCAALEDQQAKATPGLTGVISRFANRSRKIPGTVEFVEDRGRIALANPDVFKRDPVSLIRLFFVADINGLEFHPDALKRVTRSLSLIDNDLRENEEANRLFLSILTSKRDPALILRRMNEAGVLGRFIPEFGKIVSMMQFNMYHHYTVDEHLIRAVEVLSEIDKGRAEDIHPLTNKLMPNIEDRDALYVAVLLHDIAKGREEDHSEAGAAVARKLCPRFGLSPKQTELVVWLIAEHLTMSMVAQTRDLTDRKTIIDFADRVQSLDRLKMLLILTVCDIRAVGPGVWNGWKGQLLRTLYYETELLLSGGFSEVSRKERAEAAAEALEHALADWSQKERKAYVKLHYQPYLLSVPLEDQIRHTQFMRESDKAGKVLATMVRTDSFHAITEITVLSPDHPRLLTVIAGACAAAGANIADAQIFTTSDGRALDTIHVSREFPDDADELRRAATIGKMIEDVLAGRKRLPEVIATRTKNRRKNKAFVIPPSVIITNSLSNKFTVIEVECLDRPGLLSEITAVLSDLSLDIQSARITTFGEKVIDTFYVADLVGQKISNENRRAYITARLKAVMAGEEDEMRERMPSGIIAPAATRGVAVEKSDTEKKAGSAA</sequence>
<keyword id="KW-0378">Hydrolase</keyword>
<keyword id="KW-0460">Magnesium</keyword>
<keyword id="KW-0511">Multifunctional enzyme</keyword>
<keyword id="KW-0535">Nitrogen fixation</keyword>
<keyword id="KW-0548">Nucleotidyltransferase</keyword>
<keyword id="KW-0677">Repeat</keyword>
<keyword id="KW-0808">Transferase</keyword>
<name>GLND_RHITR</name>
<organism>
    <name type="scientific">Rhizobium tropici</name>
    <dbReference type="NCBI Taxonomy" id="398"/>
    <lineage>
        <taxon>Bacteria</taxon>
        <taxon>Pseudomonadati</taxon>
        <taxon>Pseudomonadota</taxon>
        <taxon>Alphaproteobacteria</taxon>
        <taxon>Hyphomicrobiales</taxon>
        <taxon>Rhizobiaceae</taxon>
        <taxon>Rhizobium/Agrobacterium group</taxon>
        <taxon>Rhizobium</taxon>
    </lineage>
</organism>